<sequence>MSKQLAAQVPAEPVVLGKMGSSYGIRGWLRVFSSTEDAESIFDYQPWFIQKAGQWQQVQLESWKHHNQDLIIKLKGVDDRDAANLLTNCEIVVDSSQLPALEEGDYYWKDLMGCQVVTAEGYDLGKVIDMMETGSNDVLVIKANLKDAFGIKERLVPFLDGQVIKKVDLATRTIEVDWDPGF</sequence>
<evidence type="ECO:0000255" key="1">
    <source>
        <dbReference type="HAMAP-Rule" id="MF_00014"/>
    </source>
</evidence>
<comment type="function">
    <text evidence="1">An accessory protein needed during the final step in the assembly of 30S ribosomal subunit, possibly for assembly of the head region. Essential for efficient processing of 16S rRNA. May be needed both before and after RbfA during the maturation of 16S rRNA. It has affinity for free ribosomal 30S subunits but not for 70S ribosomes.</text>
</comment>
<comment type="subunit">
    <text evidence="1">Binds ribosomal protein uS19.</text>
</comment>
<comment type="subcellular location">
    <subcellularLocation>
        <location evidence="1">Cytoplasm</location>
    </subcellularLocation>
</comment>
<comment type="domain">
    <text evidence="1">The PRC barrel domain binds ribosomal protein uS19.</text>
</comment>
<comment type="similarity">
    <text evidence="1">Belongs to the RimM family.</text>
</comment>
<gene>
    <name evidence="1" type="primary">rimM</name>
    <name type="ordered locus">SPAB_03388</name>
</gene>
<reference key="1">
    <citation type="submission" date="2007-11" db="EMBL/GenBank/DDBJ databases">
        <authorList>
            <consortium name="The Salmonella enterica serovar Paratyphi B Genome Sequencing Project"/>
            <person name="McClelland M."/>
            <person name="Sanderson E.K."/>
            <person name="Porwollik S."/>
            <person name="Spieth J."/>
            <person name="Clifton W.S."/>
            <person name="Fulton R."/>
            <person name="Cordes M."/>
            <person name="Wollam A."/>
            <person name="Shah N."/>
            <person name="Pepin K."/>
            <person name="Bhonagiri V."/>
            <person name="Nash W."/>
            <person name="Johnson M."/>
            <person name="Thiruvilangam P."/>
            <person name="Wilson R."/>
        </authorList>
    </citation>
    <scope>NUCLEOTIDE SEQUENCE [LARGE SCALE GENOMIC DNA]</scope>
    <source>
        <strain>ATCC BAA-1250 / SPB7</strain>
    </source>
</reference>
<name>RIMM_SALPB</name>
<keyword id="KW-0143">Chaperone</keyword>
<keyword id="KW-0963">Cytoplasm</keyword>
<keyword id="KW-0690">Ribosome biogenesis</keyword>
<keyword id="KW-0698">rRNA processing</keyword>
<proteinExistence type="inferred from homology"/>
<organism>
    <name type="scientific">Salmonella paratyphi B (strain ATCC BAA-1250 / SPB7)</name>
    <dbReference type="NCBI Taxonomy" id="1016998"/>
    <lineage>
        <taxon>Bacteria</taxon>
        <taxon>Pseudomonadati</taxon>
        <taxon>Pseudomonadota</taxon>
        <taxon>Gammaproteobacteria</taxon>
        <taxon>Enterobacterales</taxon>
        <taxon>Enterobacteriaceae</taxon>
        <taxon>Salmonella</taxon>
    </lineage>
</organism>
<protein>
    <recommendedName>
        <fullName evidence="1">Ribosome maturation factor RimM</fullName>
    </recommendedName>
</protein>
<accession>A9MZ50</accession>
<dbReference type="EMBL" id="CP000886">
    <property type="protein sequence ID" value="ABX68739.1"/>
    <property type="molecule type" value="Genomic_DNA"/>
</dbReference>
<dbReference type="RefSeq" id="WP_000043266.1">
    <property type="nucleotide sequence ID" value="NC_010102.1"/>
</dbReference>
<dbReference type="SMR" id="A9MZ50"/>
<dbReference type="KEGG" id="spq:SPAB_03388"/>
<dbReference type="PATRIC" id="fig|1016998.12.peg.3192"/>
<dbReference type="HOGENOM" id="CLU_077636_1_0_6"/>
<dbReference type="BioCyc" id="SENT1016998:SPAB_RS13840-MONOMER"/>
<dbReference type="Proteomes" id="UP000008556">
    <property type="component" value="Chromosome"/>
</dbReference>
<dbReference type="GO" id="GO:0005737">
    <property type="term" value="C:cytoplasm"/>
    <property type="evidence" value="ECO:0007669"/>
    <property type="project" value="UniProtKB-SubCell"/>
</dbReference>
<dbReference type="GO" id="GO:0005840">
    <property type="term" value="C:ribosome"/>
    <property type="evidence" value="ECO:0007669"/>
    <property type="project" value="InterPro"/>
</dbReference>
<dbReference type="GO" id="GO:0043022">
    <property type="term" value="F:ribosome binding"/>
    <property type="evidence" value="ECO:0007669"/>
    <property type="project" value="InterPro"/>
</dbReference>
<dbReference type="GO" id="GO:0042274">
    <property type="term" value="P:ribosomal small subunit biogenesis"/>
    <property type="evidence" value="ECO:0007669"/>
    <property type="project" value="UniProtKB-UniRule"/>
</dbReference>
<dbReference type="GO" id="GO:0006364">
    <property type="term" value="P:rRNA processing"/>
    <property type="evidence" value="ECO:0007669"/>
    <property type="project" value="UniProtKB-UniRule"/>
</dbReference>
<dbReference type="FunFam" id="2.30.30.240:FF:000001">
    <property type="entry name" value="Ribosome maturation factor RimM"/>
    <property type="match status" value="1"/>
</dbReference>
<dbReference type="FunFam" id="2.40.30.60:FF:000001">
    <property type="entry name" value="Ribosome maturation factor RimM"/>
    <property type="match status" value="1"/>
</dbReference>
<dbReference type="Gene3D" id="2.30.30.240">
    <property type="entry name" value="PRC-barrel domain"/>
    <property type="match status" value="1"/>
</dbReference>
<dbReference type="Gene3D" id="2.40.30.60">
    <property type="entry name" value="RimM"/>
    <property type="match status" value="1"/>
</dbReference>
<dbReference type="HAMAP" id="MF_00014">
    <property type="entry name" value="Ribosome_mat_RimM"/>
    <property type="match status" value="1"/>
</dbReference>
<dbReference type="InterPro" id="IPR011033">
    <property type="entry name" value="PRC_barrel-like_sf"/>
</dbReference>
<dbReference type="InterPro" id="IPR056792">
    <property type="entry name" value="PRC_RimM"/>
</dbReference>
<dbReference type="InterPro" id="IPR011961">
    <property type="entry name" value="RimM"/>
</dbReference>
<dbReference type="InterPro" id="IPR002676">
    <property type="entry name" value="RimM_N"/>
</dbReference>
<dbReference type="InterPro" id="IPR036976">
    <property type="entry name" value="RimM_N_sf"/>
</dbReference>
<dbReference type="InterPro" id="IPR009000">
    <property type="entry name" value="Transl_B-barrel_sf"/>
</dbReference>
<dbReference type="NCBIfam" id="TIGR02273">
    <property type="entry name" value="16S_RimM"/>
    <property type="match status" value="1"/>
</dbReference>
<dbReference type="PANTHER" id="PTHR33692">
    <property type="entry name" value="RIBOSOME MATURATION FACTOR RIMM"/>
    <property type="match status" value="1"/>
</dbReference>
<dbReference type="PANTHER" id="PTHR33692:SF1">
    <property type="entry name" value="RIBOSOME MATURATION FACTOR RIMM"/>
    <property type="match status" value="1"/>
</dbReference>
<dbReference type="Pfam" id="PF24986">
    <property type="entry name" value="PRC_RimM"/>
    <property type="match status" value="1"/>
</dbReference>
<dbReference type="Pfam" id="PF01782">
    <property type="entry name" value="RimM"/>
    <property type="match status" value="1"/>
</dbReference>
<dbReference type="SUPFAM" id="SSF50346">
    <property type="entry name" value="PRC-barrel domain"/>
    <property type="match status" value="1"/>
</dbReference>
<dbReference type="SUPFAM" id="SSF50447">
    <property type="entry name" value="Translation proteins"/>
    <property type="match status" value="1"/>
</dbReference>
<feature type="chain" id="PRO_1000074039" description="Ribosome maturation factor RimM">
    <location>
        <begin position="1"/>
        <end position="182"/>
    </location>
</feature>
<feature type="domain" description="PRC barrel" evidence="1">
    <location>
        <begin position="103"/>
        <end position="182"/>
    </location>
</feature>